<protein>
    <recommendedName>
        <fullName evidence="1">ATP synthase subunit c</fullName>
    </recommendedName>
    <alternativeName>
        <fullName evidence="1">ATP synthase F(0) sector subunit c</fullName>
    </alternativeName>
    <alternativeName>
        <fullName evidence="1">F-type ATPase subunit c</fullName>
        <shortName evidence="1">F-ATPase subunit c</shortName>
    </alternativeName>
    <alternativeName>
        <fullName evidence="1">Lipid-binding protein</fullName>
    </alternativeName>
</protein>
<organism>
    <name type="scientific">Campylobacter jejuni subsp. jejuni serotype O:23/36 (strain 81-176)</name>
    <dbReference type="NCBI Taxonomy" id="354242"/>
    <lineage>
        <taxon>Bacteria</taxon>
        <taxon>Pseudomonadati</taxon>
        <taxon>Campylobacterota</taxon>
        <taxon>Epsilonproteobacteria</taxon>
        <taxon>Campylobacterales</taxon>
        <taxon>Campylobacteraceae</taxon>
        <taxon>Campylobacter</taxon>
    </lineage>
</organism>
<comment type="function">
    <text evidence="1">F(1)F(0) ATP synthase produces ATP from ADP in the presence of a proton or sodium gradient. F-type ATPases consist of two structural domains, F(1) containing the extramembraneous catalytic core and F(0) containing the membrane proton channel, linked together by a central stalk and a peripheral stalk. During catalysis, ATP synthesis in the catalytic domain of F(1) is coupled via a rotary mechanism of the central stalk subunits to proton translocation.</text>
</comment>
<comment type="function">
    <text evidence="1">Key component of the F(0) channel; it plays a direct role in translocation across the membrane. A homomeric c-ring of between 10-14 subunits forms the central stalk rotor element with the F(1) delta and epsilon subunits.</text>
</comment>
<comment type="subunit">
    <text evidence="1">F-type ATPases have 2 components, F(1) - the catalytic core - and F(0) - the membrane proton channel. F(1) has five subunits: alpha(3), beta(3), gamma(1), delta(1), epsilon(1). F(0) has three main subunits: a(1), b(2) and c(10-14). The alpha and beta chains form an alternating ring which encloses part of the gamma chain. F(1) is attached to F(0) by a central stalk formed by the gamma and epsilon chains, while a peripheral stalk is formed by the delta and b chains.</text>
</comment>
<comment type="subcellular location">
    <subcellularLocation>
        <location evidence="1">Cell inner membrane</location>
        <topology evidence="1">Multi-pass membrane protein</topology>
    </subcellularLocation>
</comment>
<comment type="similarity">
    <text evidence="1">Belongs to the ATPase C chain family.</text>
</comment>
<keyword id="KW-0066">ATP synthesis</keyword>
<keyword id="KW-0997">Cell inner membrane</keyword>
<keyword id="KW-1003">Cell membrane</keyword>
<keyword id="KW-0138">CF(0)</keyword>
<keyword id="KW-0375">Hydrogen ion transport</keyword>
<keyword id="KW-0406">Ion transport</keyword>
<keyword id="KW-0446">Lipid-binding</keyword>
<keyword id="KW-0472">Membrane</keyword>
<keyword id="KW-0812">Transmembrane</keyword>
<keyword id="KW-1133">Transmembrane helix</keyword>
<keyword id="KW-0813">Transport</keyword>
<feature type="chain" id="PRO_0000365861" description="ATP synthase subunit c">
    <location>
        <begin position="1"/>
        <end position="112"/>
    </location>
</feature>
<feature type="transmembrane region" description="Helical" evidence="1">
    <location>
        <begin position="36"/>
        <end position="56"/>
    </location>
</feature>
<feature type="transmembrane region" description="Helical" evidence="1">
    <location>
        <begin position="81"/>
        <end position="101"/>
    </location>
</feature>
<feature type="site" description="Reversibly protonated during proton transport" evidence="1">
    <location>
        <position position="89"/>
    </location>
</feature>
<name>ATPL_CAMJJ</name>
<dbReference type="EMBL" id="DQ493926">
    <property type="protein sequence ID" value="ABF83745.1"/>
    <property type="molecule type" value="Genomic_DNA"/>
</dbReference>
<dbReference type="EMBL" id="CP000538">
    <property type="protein sequence ID" value="EAQ71884.1"/>
    <property type="molecule type" value="Genomic_DNA"/>
</dbReference>
<dbReference type="RefSeq" id="WP_002853683.1">
    <property type="nucleotide sequence ID" value="NC_008787.1"/>
</dbReference>
<dbReference type="SMR" id="Q0Q7H1"/>
<dbReference type="KEGG" id="cjj:CJJ81176_0943"/>
<dbReference type="eggNOG" id="COG0636">
    <property type="taxonomic scope" value="Bacteria"/>
</dbReference>
<dbReference type="HOGENOM" id="CLU_148047_0_1_7"/>
<dbReference type="Proteomes" id="UP000000646">
    <property type="component" value="Chromosome"/>
</dbReference>
<dbReference type="GO" id="GO:0005886">
    <property type="term" value="C:plasma membrane"/>
    <property type="evidence" value="ECO:0007669"/>
    <property type="project" value="UniProtKB-SubCell"/>
</dbReference>
<dbReference type="GO" id="GO:0045259">
    <property type="term" value="C:proton-transporting ATP synthase complex"/>
    <property type="evidence" value="ECO:0007669"/>
    <property type="project" value="UniProtKB-KW"/>
</dbReference>
<dbReference type="GO" id="GO:0033177">
    <property type="term" value="C:proton-transporting two-sector ATPase complex, proton-transporting domain"/>
    <property type="evidence" value="ECO:0007669"/>
    <property type="project" value="InterPro"/>
</dbReference>
<dbReference type="GO" id="GO:0008289">
    <property type="term" value="F:lipid binding"/>
    <property type="evidence" value="ECO:0007669"/>
    <property type="project" value="UniProtKB-KW"/>
</dbReference>
<dbReference type="GO" id="GO:0046933">
    <property type="term" value="F:proton-transporting ATP synthase activity, rotational mechanism"/>
    <property type="evidence" value="ECO:0007669"/>
    <property type="project" value="UniProtKB-UniRule"/>
</dbReference>
<dbReference type="CDD" id="cd18121">
    <property type="entry name" value="ATP-synt_Fo_c"/>
    <property type="match status" value="1"/>
</dbReference>
<dbReference type="FunFam" id="1.20.20.10:FF:000002">
    <property type="entry name" value="ATP synthase subunit c"/>
    <property type="match status" value="1"/>
</dbReference>
<dbReference type="Gene3D" id="1.20.20.10">
    <property type="entry name" value="F1F0 ATP synthase subunit C"/>
    <property type="match status" value="1"/>
</dbReference>
<dbReference type="HAMAP" id="MF_01396">
    <property type="entry name" value="ATP_synth_c_bact"/>
    <property type="match status" value="1"/>
</dbReference>
<dbReference type="InterPro" id="IPR005953">
    <property type="entry name" value="ATP_synth_csu_bac/chlpt"/>
</dbReference>
<dbReference type="InterPro" id="IPR000454">
    <property type="entry name" value="ATP_synth_F0_csu"/>
</dbReference>
<dbReference type="InterPro" id="IPR020537">
    <property type="entry name" value="ATP_synth_F0_csu_DDCD_BS"/>
</dbReference>
<dbReference type="InterPro" id="IPR038662">
    <property type="entry name" value="ATP_synth_F0_csu_sf"/>
</dbReference>
<dbReference type="InterPro" id="IPR002379">
    <property type="entry name" value="ATPase_proteolipid_c-like_dom"/>
</dbReference>
<dbReference type="InterPro" id="IPR035921">
    <property type="entry name" value="F/V-ATP_Csub_sf"/>
</dbReference>
<dbReference type="NCBIfam" id="TIGR01260">
    <property type="entry name" value="ATP_synt_c"/>
    <property type="match status" value="1"/>
</dbReference>
<dbReference type="NCBIfam" id="NF006295">
    <property type="entry name" value="PRK08482.1"/>
    <property type="match status" value="1"/>
</dbReference>
<dbReference type="Pfam" id="PF00137">
    <property type="entry name" value="ATP-synt_C"/>
    <property type="match status" value="1"/>
</dbReference>
<dbReference type="PRINTS" id="PR00124">
    <property type="entry name" value="ATPASEC"/>
</dbReference>
<dbReference type="SUPFAM" id="SSF81333">
    <property type="entry name" value="F1F0 ATP synthase subunit C"/>
    <property type="match status" value="1"/>
</dbReference>
<dbReference type="PROSITE" id="PS00605">
    <property type="entry name" value="ATPASE_C"/>
    <property type="match status" value="1"/>
</dbReference>
<accession>Q0Q7H1</accession>
<proteinExistence type="inferred from homology"/>
<gene>
    <name evidence="1" type="primary">atpE</name>
    <name type="ordered locus">CJJ81176_0943</name>
    <name type="ORF">cj0936</name>
</gene>
<evidence type="ECO:0000255" key="1">
    <source>
        <dbReference type="HAMAP-Rule" id="MF_01396"/>
    </source>
</evidence>
<reference key="1">
    <citation type="journal article" date="2006" name="Infect. Immun.">
        <title>Unique features of a highly pathogenic Campylobacter jejuni strain.</title>
        <authorList>
            <person name="Hofreuter D."/>
            <person name="Tsai J."/>
            <person name="Watson R.O."/>
            <person name="Novik V."/>
            <person name="Altman B."/>
            <person name="Benitez M."/>
            <person name="Clark C."/>
            <person name="Perbost C."/>
            <person name="Jarvie T."/>
            <person name="Du L."/>
            <person name="Galan J.E."/>
        </authorList>
    </citation>
    <scope>NUCLEOTIDE SEQUENCE [GENOMIC DNA]</scope>
</reference>
<reference key="2">
    <citation type="submission" date="2006-12" db="EMBL/GenBank/DDBJ databases">
        <authorList>
            <person name="Fouts D.E."/>
            <person name="Nelson K.E."/>
            <person name="Sebastian Y."/>
        </authorList>
    </citation>
    <scope>NUCLEOTIDE SEQUENCE [LARGE SCALE GENOMIC DNA]</scope>
    <source>
        <strain>81-176</strain>
    </source>
</reference>
<sequence>MKKVLFLLLACAAVAFAAETNAPVEQEAINVWIKAFSVLAAGLGLGVAALGGAIGMGNTAAATIAGTARNPGLGPKLMTTMFIALAMIEAQVIYALVIALIALYANPFIVLQ</sequence>